<evidence type="ECO:0000255" key="1">
    <source>
        <dbReference type="HAMAP-Rule" id="MF_00031"/>
    </source>
</evidence>
<name>RUVA_SALPA</name>
<keyword id="KW-0963">Cytoplasm</keyword>
<keyword id="KW-0227">DNA damage</keyword>
<keyword id="KW-0233">DNA recombination</keyword>
<keyword id="KW-0234">DNA repair</keyword>
<keyword id="KW-0238">DNA-binding</keyword>
<protein>
    <recommendedName>
        <fullName evidence="1">Holliday junction branch migration complex subunit RuvA</fullName>
    </recommendedName>
</protein>
<dbReference type="EMBL" id="CP000026">
    <property type="protein sequence ID" value="AAV76949.1"/>
    <property type="molecule type" value="Genomic_DNA"/>
</dbReference>
<dbReference type="RefSeq" id="WP_000580335.1">
    <property type="nucleotide sequence ID" value="NC_006511.1"/>
</dbReference>
<dbReference type="SMR" id="Q5PN01"/>
<dbReference type="KEGG" id="spt:SPA0974"/>
<dbReference type="HOGENOM" id="CLU_087936_0_0_6"/>
<dbReference type="Proteomes" id="UP000008185">
    <property type="component" value="Chromosome"/>
</dbReference>
<dbReference type="GO" id="GO:0005737">
    <property type="term" value="C:cytoplasm"/>
    <property type="evidence" value="ECO:0007669"/>
    <property type="project" value="UniProtKB-SubCell"/>
</dbReference>
<dbReference type="GO" id="GO:0009379">
    <property type="term" value="C:Holliday junction helicase complex"/>
    <property type="evidence" value="ECO:0007669"/>
    <property type="project" value="InterPro"/>
</dbReference>
<dbReference type="GO" id="GO:0048476">
    <property type="term" value="C:Holliday junction resolvase complex"/>
    <property type="evidence" value="ECO:0007669"/>
    <property type="project" value="UniProtKB-UniRule"/>
</dbReference>
<dbReference type="GO" id="GO:0005524">
    <property type="term" value="F:ATP binding"/>
    <property type="evidence" value="ECO:0007669"/>
    <property type="project" value="InterPro"/>
</dbReference>
<dbReference type="GO" id="GO:0000400">
    <property type="term" value="F:four-way junction DNA binding"/>
    <property type="evidence" value="ECO:0007669"/>
    <property type="project" value="UniProtKB-UniRule"/>
</dbReference>
<dbReference type="GO" id="GO:0009378">
    <property type="term" value="F:four-way junction helicase activity"/>
    <property type="evidence" value="ECO:0007669"/>
    <property type="project" value="InterPro"/>
</dbReference>
<dbReference type="GO" id="GO:0006310">
    <property type="term" value="P:DNA recombination"/>
    <property type="evidence" value="ECO:0007669"/>
    <property type="project" value="UniProtKB-UniRule"/>
</dbReference>
<dbReference type="GO" id="GO:0006281">
    <property type="term" value="P:DNA repair"/>
    <property type="evidence" value="ECO:0007669"/>
    <property type="project" value="UniProtKB-UniRule"/>
</dbReference>
<dbReference type="CDD" id="cd14332">
    <property type="entry name" value="UBA_RuvA_C"/>
    <property type="match status" value="1"/>
</dbReference>
<dbReference type="FunFam" id="1.10.150.20:FF:000012">
    <property type="entry name" value="Holliday junction ATP-dependent DNA helicase RuvA"/>
    <property type="match status" value="1"/>
</dbReference>
<dbReference type="FunFam" id="1.10.8.10:FF:000008">
    <property type="entry name" value="Holliday junction ATP-dependent DNA helicase RuvA"/>
    <property type="match status" value="1"/>
</dbReference>
<dbReference type="FunFam" id="2.40.50.140:FF:000083">
    <property type="entry name" value="Holliday junction ATP-dependent DNA helicase RuvA"/>
    <property type="match status" value="1"/>
</dbReference>
<dbReference type="Gene3D" id="1.10.150.20">
    <property type="entry name" value="5' to 3' exonuclease, C-terminal subdomain"/>
    <property type="match status" value="1"/>
</dbReference>
<dbReference type="Gene3D" id="1.10.8.10">
    <property type="entry name" value="DNA helicase RuvA subunit, C-terminal domain"/>
    <property type="match status" value="1"/>
</dbReference>
<dbReference type="Gene3D" id="2.40.50.140">
    <property type="entry name" value="Nucleic acid-binding proteins"/>
    <property type="match status" value="1"/>
</dbReference>
<dbReference type="HAMAP" id="MF_00031">
    <property type="entry name" value="DNA_HJ_migration_RuvA"/>
    <property type="match status" value="1"/>
</dbReference>
<dbReference type="InterPro" id="IPR013849">
    <property type="entry name" value="DNA_helicase_Holl-junc_RuvA_I"/>
</dbReference>
<dbReference type="InterPro" id="IPR003583">
    <property type="entry name" value="Hlx-hairpin-Hlx_DNA-bd_motif"/>
</dbReference>
<dbReference type="InterPro" id="IPR012340">
    <property type="entry name" value="NA-bd_OB-fold"/>
</dbReference>
<dbReference type="InterPro" id="IPR000085">
    <property type="entry name" value="RuvA"/>
</dbReference>
<dbReference type="InterPro" id="IPR010994">
    <property type="entry name" value="RuvA_2-like"/>
</dbReference>
<dbReference type="InterPro" id="IPR011114">
    <property type="entry name" value="RuvA_C"/>
</dbReference>
<dbReference type="InterPro" id="IPR036267">
    <property type="entry name" value="RuvA_C_sf"/>
</dbReference>
<dbReference type="NCBIfam" id="TIGR00084">
    <property type="entry name" value="ruvA"/>
    <property type="match status" value="1"/>
</dbReference>
<dbReference type="Pfam" id="PF14520">
    <property type="entry name" value="HHH_5"/>
    <property type="match status" value="1"/>
</dbReference>
<dbReference type="Pfam" id="PF07499">
    <property type="entry name" value="RuvA_C"/>
    <property type="match status" value="1"/>
</dbReference>
<dbReference type="Pfam" id="PF01330">
    <property type="entry name" value="RuvA_N"/>
    <property type="match status" value="1"/>
</dbReference>
<dbReference type="SMART" id="SM00278">
    <property type="entry name" value="HhH1"/>
    <property type="match status" value="2"/>
</dbReference>
<dbReference type="SUPFAM" id="SSF46929">
    <property type="entry name" value="DNA helicase RuvA subunit, C-terminal domain"/>
    <property type="match status" value="1"/>
</dbReference>
<dbReference type="SUPFAM" id="SSF50249">
    <property type="entry name" value="Nucleic acid-binding proteins"/>
    <property type="match status" value="1"/>
</dbReference>
<dbReference type="SUPFAM" id="SSF47781">
    <property type="entry name" value="RuvA domain 2-like"/>
    <property type="match status" value="1"/>
</dbReference>
<accession>Q5PN01</accession>
<reference key="1">
    <citation type="journal article" date="2004" name="Nat. Genet.">
        <title>Comparison of genome degradation in Paratyphi A and Typhi, human-restricted serovars of Salmonella enterica that cause typhoid.</title>
        <authorList>
            <person name="McClelland M."/>
            <person name="Sanderson K.E."/>
            <person name="Clifton S.W."/>
            <person name="Latreille P."/>
            <person name="Porwollik S."/>
            <person name="Sabo A."/>
            <person name="Meyer R."/>
            <person name="Bieri T."/>
            <person name="Ozersky P."/>
            <person name="McLellan M."/>
            <person name="Harkins C.R."/>
            <person name="Wang C."/>
            <person name="Nguyen C."/>
            <person name="Berghoff A."/>
            <person name="Elliott G."/>
            <person name="Kohlberg S."/>
            <person name="Strong C."/>
            <person name="Du F."/>
            <person name="Carter J."/>
            <person name="Kremizki C."/>
            <person name="Layman D."/>
            <person name="Leonard S."/>
            <person name="Sun H."/>
            <person name="Fulton L."/>
            <person name="Nash W."/>
            <person name="Miner T."/>
            <person name="Minx P."/>
            <person name="Delehaunty K."/>
            <person name="Fronick C."/>
            <person name="Magrini V."/>
            <person name="Nhan M."/>
            <person name="Warren W."/>
            <person name="Florea L."/>
            <person name="Spieth J."/>
            <person name="Wilson R.K."/>
        </authorList>
    </citation>
    <scope>NUCLEOTIDE SEQUENCE [LARGE SCALE GENOMIC DNA]</scope>
    <source>
        <strain>ATCC 9150 / SARB42</strain>
    </source>
</reference>
<organism>
    <name type="scientific">Salmonella paratyphi A (strain ATCC 9150 / SARB42)</name>
    <dbReference type="NCBI Taxonomy" id="295319"/>
    <lineage>
        <taxon>Bacteria</taxon>
        <taxon>Pseudomonadati</taxon>
        <taxon>Pseudomonadota</taxon>
        <taxon>Gammaproteobacteria</taxon>
        <taxon>Enterobacterales</taxon>
        <taxon>Enterobacteriaceae</taxon>
        <taxon>Salmonella</taxon>
    </lineage>
</organism>
<feature type="chain" id="PRO_0000224905" description="Holliday junction branch migration complex subunit RuvA">
    <location>
        <begin position="1"/>
        <end position="203"/>
    </location>
</feature>
<feature type="region of interest" description="Domain I" evidence="1">
    <location>
        <begin position="1"/>
        <end position="64"/>
    </location>
</feature>
<feature type="region of interest" description="Domain II" evidence="1">
    <location>
        <begin position="65"/>
        <end position="142"/>
    </location>
</feature>
<feature type="region of interest" description="Flexible linker" evidence="1">
    <location>
        <begin position="143"/>
        <end position="154"/>
    </location>
</feature>
<feature type="region of interest" description="Domain III" evidence="1">
    <location>
        <begin position="155"/>
        <end position="203"/>
    </location>
</feature>
<proteinExistence type="inferred from homology"/>
<sequence length="203" mass="22146">MIGRLRGIILEKQPPIVLLETGGVGYEVHMPMTCFYELPEAGQEAIVFTHFVVREDAQLLYGFNNKQERTLFKELIKTNGVGPKLALAILSGMSAQQFVNAVEREELGALVKLPGIGKKTAERLIVEMKDRFKGLHGDLFTPAVDLVLTSPASPTSEDAEQEAVAALVALGYKPQEASRMVSKIARPDASSETLIRDALRAAL</sequence>
<gene>
    <name evidence="1" type="primary">ruvA</name>
    <name type="ordered locus">SPA0974</name>
</gene>
<comment type="function">
    <text evidence="1">The RuvA-RuvB-RuvC complex processes Holliday junction (HJ) DNA during genetic recombination and DNA repair, while the RuvA-RuvB complex plays an important role in the rescue of blocked DNA replication forks via replication fork reversal (RFR). RuvA specifically binds to HJ cruciform DNA, conferring on it an open structure. The RuvB hexamer acts as an ATP-dependent pump, pulling dsDNA into and through the RuvAB complex. HJ branch migration allows RuvC to scan DNA until it finds its consensus sequence, where it cleaves and resolves the cruciform DNA.</text>
</comment>
<comment type="subunit">
    <text evidence="1">Homotetramer. Forms an RuvA(8)-RuvB(12)-Holliday junction (HJ) complex. HJ DNA is sandwiched between 2 RuvA tetramers; dsDNA enters through RuvA and exits via RuvB. An RuvB hexamer assembles on each DNA strand where it exits the tetramer. Each RuvB hexamer is contacted by two RuvA subunits (via domain III) on 2 adjacent RuvB subunits; this complex drives branch migration. In the full resolvosome a probable DNA-RuvA(4)-RuvB(12)-RuvC(2) complex forms which resolves the HJ.</text>
</comment>
<comment type="subcellular location">
    <subcellularLocation>
        <location evidence="1">Cytoplasm</location>
    </subcellularLocation>
</comment>
<comment type="domain">
    <text evidence="1">Has three domains with a flexible linker between the domains II and III and assumes an 'L' shape. Domain III is highly mobile and contacts RuvB.</text>
</comment>
<comment type="similarity">
    <text evidence="1">Belongs to the RuvA family.</text>
</comment>